<name>MEND_MYCSJ</name>
<reference key="1">
    <citation type="submission" date="2007-02" db="EMBL/GenBank/DDBJ databases">
        <title>Complete sequence of Mycobacterium sp. JLS.</title>
        <authorList>
            <consortium name="US DOE Joint Genome Institute"/>
            <person name="Copeland A."/>
            <person name="Lucas S."/>
            <person name="Lapidus A."/>
            <person name="Barry K."/>
            <person name="Detter J.C."/>
            <person name="Glavina del Rio T."/>
            <person name="Hammon N."/>
            <person name="Israni S."/>
            <person name="Dalin E."/>
            <person name="Tice H."/>
            <person name="Pitluck S."/>
            <person name="Chain P."/>
            <person name="Malfatti S."/>
            <person name="Shin M."/>
            <person name="Vergez L."/>
            <person name="Schmutz J."/>
            <person name="Larimer F."/>
            <person name="Land M."/>
            <person name="Hauser L."/>
            <person name="Kyrpides N."/>
            <person name="Mikhailova N."/>
            <person name="Miller C.D."/>
            <person name="Anderson A.J."/>
            <person name="Sims R.C."/>
            <person name="Richardson P."/>
        </authorList>
    </citation>
    <scope>NUCLEOTIDE SEQUENCE [LARGE SCALE GENOMIC DNA]</scope>
    <source>
        <strain>JLS</strain>
    </source>
</reference>
<evidence type="ECO:0000255" key="1">
    <source>
        <dbReference type="HAMAP-Rule" id="MF_01659"/>
    </source>
</evidence>
<keyword id="KW-0460">Magnesium</keyword>
<keyword id="KW-0464">Manganese</keyword>
<keyword id="KW-0474">Menaquinone biosynthesis</keyword>
<keyword id="KW-0479">Metal-binding</keyword>
<keyword id="KW-0786">Thiamine pyrophosphate</keyword>
<keyword id="KW-0808">Transferase</keyword>
<proteinExistence type="inferred from homology"/>
<accession>A3PUH9</accession>
<dbReference type="EC" id="2.2.1.9" evidence="1"/>
<dbReference type="EMBL" id="CP000580">
    <property type="protein sequence ID" value="ABN96556.1"/>
    <property type="molecule type" value="Genomic_DNA"/>
</dbReference>
<dbReference type="SMR" id="A3PUH9"/>
<dbReference type="KEGG" id="mjl:Mjls_0745"/>
<dbReference type="HOGENOM" id="CLU_006051_4_1_11"/>
<dbReference type="BioCyc" id="MSP164757:G1G8C-752-MONOMER"/>
<dbReference type="UniPathway" id="UPA00079"/>
<dbReference type="UniPathway" id="UPA01057">
    <property type="reaction ID" value="UER00164"/>
</dbReference>
<dbReference type="GO" id="GO:0070204">
    <property type="term" value="F:2-succinyl-5-enolpyruvyl-6-hydroxy-3-cyclohexene-1-carboxylic-acid synthase activity"/>
    <property type="evidence" value="ECO:0007669"/>
    <property type="project" value="UniProtKB-UniRule"/>
</dbReference>
<dbReference type="GO" id="GO:0000287">
    <property type="term" value="F:magnesium ion binding"/>
    <property type="evidence" value="ECO:0007669"/>
    <property type="project" value="UniProtKB-UniRule"/>
</dbReference>
<dbReference type="GO" id="GO:0030145">
    <property type="term" value="F:manganese ion binding"/>
    <property type="evidence" value="ECO:0007669"/>
    <property type="project" value="UniProtKB-UniRule"/>
</dbReference>
<dbReference type="GO" id="GO:0030976">
    <property type="term" value="F:thiamine pyrophosphate binding"/>
    <property type="evidence" value="ECO:0007669"/>
    <property type="project" value="UniProtKB-UniRule"/>
</dbReference>
<dbReference type="GO" id="GO:0009234">
    <property type="term" value="P:menaquinone biosynthetic process"/>
    <property type="evidence" value="ECO:0007669"/>
    <property type="project" value="UniProtKB-UniRule"/>
</dbReference>
<dbReference type="CDD" id="cd07037">
    <property type="entry name" value="TPP_PYR_MenD"/>
    <property type="match status" value="1"/>
</dbReference>
<dbReference type="CDD" id="cd02009">
    <property type="entry name" value="TPP_SHCHC_synthase"/>
    <property type="match status" value="1"/>
</dbReference>
<dbReference type="Gene3D" id="3.40.50.970">
    <property type="match status" value="2"/>
</dbReference>
<dbReference type="Gene3D" id="3.40.50.1220">
    <property type="entry name" value="TPP-binding domain"/>
    <property type="match status" value="1"/>
</dbReference>
<dbReference type="HAMAP" id="MF_01659">
    <property type="entry name" value="MenD"/>
    <property type="match status" value="1"/>
</dbReference>
<dbReference type="InterPro" id="IPR004433">
    <property type="entry name" value="MenaQ_synth_MenD"/>
</dbReference>
<dbReference type="InterPro" id="IPR029061">
    <property type="entry name" value="THDP-binding"/>
</dbReference>
<dbReference type="InterPro" id="IPR012001">
    <property type="entry name" value="Thiamin_PyroP_enz_TPP-bd_dom"/>
</dbReference>
<dbReference type="NCBIfam" id="TIGR00173">
    <property type="entry name" value="menD"/>
    <property type="match status" value="1"/>
</dbReference>
<dbReference type="PANTHER" id="PTHR42916">
    <property type="entry name" value="2-SUCCINYL-5-ENOLPYRUVYL-6-HYDROXY-3-CYCLOHEXENE-1-CARBOXYLATE SYNTHASE"/>
    <property type="match status" value="1"/>
</dbReference>
<dbReference type="PANTHER" id="PTHR42916:SF1">
    <property type="entry name" value="PROTEIN PHYLLO, CHLOROPLASTIC"/>
    <property type="match status" value="1"/>
</dbReference>
<dbReference type="Pfam" id="PF02776">
    <property type="entry name" value="TPP_enzyme_N"/>
    <property type="match status" value="1"/>
</dbReference>
<dbReference type="PIRSF" id="PIRSF004983">
    <property type="entry name" value="MenD"/>
    <property type="match status" value="1"/>
</dbReference>
<dbReference type="SUPFAM" id="SSF52518">
    <property type="entry name" value="Thiamin diphosphate-binding fold (THDP-binding)"/>
    <property type="match status" value="2"/>
</dbReference>
<sequence>MNPSTAQARVVVDELVRGGVHDVVLCPGSRNAPLAFALADADRAGRLRLHVRIDERTAGFLAIGLAVADRAPVCVAMTSGTAVANLGPAVVEANYARVPLIVLSANRPYELLGTGANQTFEQLGYFGNQVRANISLGLAPELSAGSPGDMTSLNAQWRSATCRVVVAATGSRSANAGPVQFDIPLREPLVPTFDDDGSCPPGRPDGKPWTHTPPVTFDQPLDIDLTPDTVVIAGHGAGVHPNLADLPTVAEPTAPPAANPLHPMALRLLRPKQVIMLGRPTLHRPVSALLADPSVPVYALTTGPRWPDVSGNSQATGTRAVTSGTPDPAWLRRCKEVNDHAVAAVREQLAAHPLTTGLHVAAAVADAVRPGDQLVLGASNPVRDAALVGFTPHGVQVRSNRGVAGIDGTVSTAIGAALAHDRTGGRTIALMGDLTFVHDSSGLLIGPTEPTPRNLTIVVSNDNGGGIFELLEQGDPRFSDVSSRVFGTPHDVDVGALCRAYHVDNRQIEVGQLADALDEPHEGMRVLEVKADRSSLRALHASIKAAL</sequence>
<organism>
    <name type="scientific">Mycobacterium sp. (strain JLS)</name>
    <dbReference type="NCBI Taxonomy" id="164757"/>
    <lineage>
        <taxon>Bacteria</taxon>
        <taxon>Bacillati</taxon>
        <taxon>Actinomycetota</taxon>
        <taxon>Actinomycetes</taxon>
        <taxon>Mycobacteriales</taxon>
        <taxon>Mycobacteriaceae</taxon>
        <taxon>Mycobacterium</taxon>
    </lineage>
</organism>
<feature type="chain" id="PRO_0000341781" description="2-succinyl-5-enolpyruvyl-6-hydroxy-3-cyclohexene-1-carboxylate synthase">
    <location>
        <begin position="1"/>
        <end position="547"/>
    </location>
</feature>
<gene>
    <name evidence="1" type="primary">menD</name>
    <name type="ordered locus">Mjls_0745</name>
</gene>
<protein>
    <recommendedName>
        <fullName evidence="1">2-succinyl-5-enolpyruvyl-6-hydroxy-3-cyclohexene-1-carboxylate synthase</fullName>
        <shortName evidence="1">SEPHCHC synthase</shortName>
        <ecNumber evidence="1">2.2.1.9</ecNumber>
    </recommendedName>
    <alternativeName>
        <fullName evidence="1">Menaquinone biosynthesis protein MenD</fullName>
    </alternativeName>
</protein>
<comment type="function">
    <text evidence="1">Catalyzes the thiamine diphosphate-dependent decarboxylation of 2-oxoglutarate and the subsequent addition of the resulting succinic semialdehyde-thiamine pyrophosphate anion to isochorismate to yield 2-succinyl-5-enolpyruvyl-6-hydroxy-3-cyclohexene-1-carboxylate (SEPHCHC).</text>
</comment>
<comment type="catalytic activity">
    <reaction evidence="1">
        <text>isochorismate + 2-oxoglutarate + H(+) = 5-enolpyruvoyl-6-hydroxy-2-succinyl-cyclohex-3-ene-1-carboxylate + CO2</text>
        <dbReference type="Rhea" id="RHEA:25593"/>
        <dbReference type="ChEBI" id="CHEBI:15378"/>
        <dbReference type="ChEBI" id="CHEBI:16526"/>
        <dbReference type="ChEBI" id="CHEBI:16810"/>
        <dbReference type="ChEBI" id="CHEBI:29780"/>
        <dbReference type="ChEBI" id="CHEBI:58818"/>
        <dbReference type="EC" id="2.2.1.9"/>
    </reaction>
</comment>
<comment type="cofactor">
    <cofactor evidence="1">
        <name>Mg(2+)</name>
        <dbReference type="ChEBI" id="CHEBI:18420"/>
    </cofactor>
    <cofactor evidence="1">
        <name>Mn(2+)</name>
        <dbReference type="ChEBI" id="CHEBI:29035"/>
    </cofactor>
</comment>
<comment type="cofactor">
    <cofactor evidence="1">
        <name>thiamine diphosphate</name>
        <dbReference type="ChEBI" id="CHEBI:58937"/>
    </cofactor>
    <text evidence="1">Binds 1 thiamine pyrophosphate per subunit.</text>
</comment>
<comment type="pathway">
    <text evidence="1">Quinol/quinone metabolism; 1,4-dihydroxy-2-naphthoate biosynthesis; 1,4-dihydroxy-2-naphthoate from chorismate: step 2/7.</text>
</comment>
<comment type="pathway">
    <text evidence="1">Quinol/quinone metabolism; menaquinone biosynthesis.</text>
</comment>
<comment type="subunit">
    <text evidence="1">Homodimer.</text>
</comment>
<comment type="similarity">
    <text evidence="1">Belongs to the TPP enzyme family. MenD subfamily.</text>
</comment>